<feature type="chain" id="PRO_0000100578" description="Phosphoribosylformylglycinamidine synthase subunit PurQ">
    <location>
        <begin position="1"/>
        <end position="221"/>
    </location>
</feature>
<feature type="domain" description="Glutamine amidotransferase type-1" evidence="1">
    <location>
        <begin position="5"/>
        <end position="221"/>
    </location>
</feature>
<feature type="active site" description="Nucleophile" evidence="1">
    <location>
        <position position="89"/>
    </location>
</feature>
<feature type="active site" evidence="1">
    <location>
        <position position="197"/>
    </location>
</feature>
<feature type="active site" evidence="1">
    <location>
        <position position="199"/>
    </location>
</feature>
<accession>Q7V1S5</accession>
<organism>
    <name type="scientific">Prochlorococcus marinus subsp. pastoris (strain CCMP1986 / NIES-2087 / MED4)</name>
    <dbReference type="NCBI Taxonomy" id="59919"/>
    <lineage>
        <taxon>Bacteria</taxon>
        <taxon>Bacillati</taxon>
        <taxon>Cyanobacteriota</taxon>
        <taxon>Cyanophyceae</taxon>
        <taxon>Synechococcales</taxon>
        <taxon>Prochlorococcaceae</taxon>
        <taxon>Prochlorococcus</taxon>
    </lineage>
</organism>
<keyword id="KW-0067">ATP-binding</keyword>
<keyword id="KW-0963">Cytoplasm</keyword>
<keyword id="KW-0315">Glutamine amidotransferase</keyword>
<keyword id="KW-0378">Hydrolase</keyword>
<keyword id="KW-0436">Ligase</keyword>
<keyword id="KW-0547">Nucleotide-binding</keyword>
<keyword id="KW-0658">Purine biosynthesis</keyword>
<proteinExistence type="inferred from homology"/>
<dbReference type="EC" id="6.3.5.3" evidence="1"/>
<dbReference type="EC" id="3.5.1.2" evidence="1"/>
<dbReference type="EMBL" id="BX548174">
    <property type="protein sequence ID" value="CAE19239.1"/>
    <property type="molecule type" value="Genomic_DNA"/>
</dbReference>
<dbReference type="RefSeq" id="WP_011132414.1">
    <property type="nucleotide sequence ID" value="NC_005072.1"/>
</dbReference>
<dbReference type="SMR" id="Q7V1S5"/>
<dbReference type="STRING" id="59919.PMM0780"/>
<dbReference type="KEGG" id="pmm:PMM0780"/>
<dbReference type="eggNOG" id="COG0047">
    <property type="taxonomic scope" value="Bacteria"/>
</dbReference>
<dbReference type="HOGENOM" id="CLU_001031_3_1_3"/>
<dbReference type="OrthoDB" id="9804441at2"/>
<dbReference type="UniPathway" id="UPA00074">
    <property type="reaction ID" value="UER00128"/>
</dbReference>
<dbReference type="Proteomes" id="UP000001026">
    <property type="component" value="Chromosome"/>
</dbReference>
<dbReference type="GO" id="GO:0005737">
    <property type="term" value="C:cytoplasm"/>
    <property type="evidence" value="ECO:0007669"/>
    <property type="project" value="UniProtKB-SubCell"/>
</dbReference>
<dbReference type="GO" id="GO:0005524">
    <property type="term" value="F:ATP binding"/>
    <property type="evidence" value="ECO:0007669"/>
    <property type="project" value="UniProtKB-KW"/>
</dbReference>
<dbReference type="GO" id="GO:0004359">
    <property type="term" value="F:glutaminase activity"/>
    <property type="evidence" value="ECO:0007669"/>
    <property type="project" value="UniProtKB-EC"/>
</dbReference>
<dbReference type="GO" id="GO:0004642">
    <property type="term" value="F:phosphoribosylformylglycinamidine synthase activity"/>
    <property type="evidence" value="ECO:0007669"/>
    <property type="project" value="UniProtKB-UniRule"/>
</dbReference>
<dbReference type="GO" id="GO:0006189">
    <property type="term" value="P:'de novo' IMP biosynthetic process"/>
    <property type="evidence" value="ECO:0007669"/>
    <property type="project" value="UniProtKB-UniRule"/>
</dbReference>
<dbReference type="CDD" id="cd01740">
    <property type="entry name" value="GATase1_FGAR_AT"/>
    <property type="match status" value="1"/>
</dbReference>
<dbReference type="Gene3D" id="3.40.50.880">
    <property type="match status" value="1"/>
</dbReference>
<dbReference type="HAMAP" id="MF_00421">
    <property type="entry name" value="PurQ"/>
    <property type="match status" value="1"/>
</dbReference>
<dbReference type="InterPro" id="IPR029062">
    <property type="entry name" value="Class_I_gatase-like"/>
</dbReference>
<dbReference type="InterPro" id="IPR010075">
    <property type="entry name" value="PRibForGlyAmidine_synth_PurQ"/>
</dbReference>
<dbReference type="NCBIfam" id="TIGR01737">
    <property type="entry name" value="FGAM_synth_I"/>
    <property type="match status" value="1"/>
</dbReference>
<dbReference type="NCBIfam" id="NF002957">
    <property type="entry name" value="PRK03619.1"/>
    <property type="match status" value="1"/>
</dbReference>
<dbReference type="PANTHER" id="PTHR47552">
    <property type="entry name" value="PHOSPHORIBOSYLFORMYLGLYCINAMIDINE SYNTHASE SUBUNIT PURQ"/>
    <property type="match status" value="1"/>
</dbReference>
<dbReference type="PANTHER" id="PTHR47552:SF1">
    <property type="entry name" value="PHOSPHORIBOSYLFORMYLGLYCINAMIDINE SYNTHASE SUBUNIT PURQ"/>
    <property type="match status" value="1"/>
</dbReference>
<dbReference type="Pfam" id="PF13507">
    <property type="entry name" value="GATase_5"/>
    <property type="match status" value="1"/>
</dbReference>
<dbReference type="PIRSF" id="PIRSF001586">
    <property type="entry name" value="FGAM_synth_I"/>
    <property type="match status" value="1"/>
</dbReference>
<dbReference type="SMART" id="SM01211">
    <property type="entry name" value="GATase_5"/>
    <property type="match status" value="1"/>
</dbReference>
<dbReference type="SUPFAM" id="SSF52317">
    <property type="entry name" value="Class I glutamine amidotransferase-like"/>
    <property type="match status" value="1"/>
</dbReference>
<dbReference type="PROSITE" id="PS51273">
    <property type="entry name" value="GATASE_TYPE_1"/>
    <property type="match status" value="1"/>
</dbReference>
<sequence>MASFTVGIVVFPGSNCDRDVSWALEGCLDIKTKFLWHESSDLNDVDSIVLPGGFSYGDYLRCGAIARFSPLINSLHDFIKSGRRVLGICNGFQILTESGFLPGALVANKNLNFICDDVDLNVITSKGGWFQKLNENQNIKLPIAHGEGCYHCDQDTLKRLVDNDLIALKYKTNPNGSTSDIAGITNEKGNVLGLMPHPERACDESIGGIDGLYTLRSLITQ</sequence>
<gene>
    <name evidence="1" type="primary">purQ</name>
    <name type="ordered locus">PMM0780</name>
</gene>
<comment type="function">
    <text evidence="1">Part of the phosphoribosylformylglycinamidine synthase complex involved in the purines biosynthetic pathway. Catalyzes the ATP-dependent conversion of formylglycinamide ribonucleotide (FGAR) and glutamine to yield formylglycinamidine ribonucleotide (FGAM) and glutamate. The FGAM synthase complex is composed of three subunits. PurQ produces an ammonia molecule by converting glutamine to glutamate. PurL transfers the ammonia molecule to FGAR to form FGAM in an ATP-dependent manner. PurS interacts with PurQ and PurL and is thought to assist in the transfer of the ammonia molecule from PurQ to PurL.</text>
</comment>
<comment type="catalytic activity">
    <reaction evidence="1">
        <text>N(2)-formyl-N(1)-(5-phospho-beta-D-ribosyl)glycinamide + L-glutamine + ATP + H2O = 2-formamido-N(1)-(5-O-phospho-beta-D-ribosyl)acetamidine + L-glutamate + ADP + phosphate + H(+)</text>
        <dbReference type="Rhea" id="RHEA:17129"/>
        <dbReference type="ChEBI" id="CHEBI:15377"/>
        <dbReference type="ChEBI" id="CHEBI:15378"/>
        <dbReference type="ChEBI" id="CHEBI:29985"/>
        <dbReference type="ChEBI" id="CHEBI:30616"/>
        <dbReference type="ChEBI" id="CHEBI:43474"/>
        <dbReference type="ChEBI" id="CHEBI:58359"/>
        <dbReference type="ChEBI" id="CHEBI:147286"/>
        <dbReference type="ChEBI" id="CHEBI:147287"/>
        <dbReference type="ChEBI" id="CHEBI:456216"/>
        <dbReference type="EC" id="6.3.5.3"/>
    </reaction>
</comment>
<comment type="catalytic activity">
    <reaction evidence="1">
        <text>L-glutamine + H2O = L-glutamate + NH4(+)</text>
        <dbReference type="Rhea" id="RHEA:15889"/>
        <dbReference type="ChEBI" id="CHEBI:15377"/>
        <dbReference type="ChEBI" id="CHEBI:28938"/>
        <dbReference type="ChEBI" id="CHEBI:29985"/>
        <dbReference type="ChEBI" id="CHEBI:58359"/>
        <dbReference type="EC" id="3.5.1.2"/>
    </reaction>
</comment>
<comment type="pathway">
    <text evidence="1">Purine metabolism; IMP biosynthesis via de novo pathway; 5-amino-1-(5-phospho-D-ribosyl)imidazole from N(2)-formyl-N(1)-(5-phospho-D-ribosyl)glycinamide: step 1/2.</text>
</comment>
<comment type="subunit">
    <text evidence="1">Part of the FGAM synthase complex composed of 1 PurL, 1 PurQ and 2 PurS subunits.</text>
</comment>
<comment type="subcellular location">
    <subcellularLocation>
        <location evidence="1">Cytoplasm</location>
    </subcellularLocation>
</comment>
<evidence type="ECO:0000255" key="1">
    <source>
        <dbReference type="HAMAP-Rule" id="MF_00421"/>
    </source>
</evidence>
<protein>
    <recommendedName>
        <fullName evidence="1">Phosphoribosylformylglycinamidine synthase subunit PurQ</fullName>
        <shortName evidence="1">FGAM synthase</shortName>
        <ecNumber evidence="1">6.3.5.3</ecNumber>
    </recommendedName>
    <alternativeName>
        <fullName evidence="1">Formylglycinamide ribonucleotide amidotransferase subunit I</fullName>
        <shortName evidence="1">FGAR amidotransferase I</shortName>
        <shortName evidence="1">FGAR-AT I</shortName>
    </alternativeName>
    <alternativeName>
        <fullName evidence="1">Glutaminase PurQ</fullName>
        <ecNumber evidence="1">3.5.1.2</ecNumber>
    </alternativeName>
    <alternativeName>
        <fullName evidence="1">Phosphoribosylformylglycinamidine synthase subunit I</fullName>
    </alternativeName>
</protein>
<name>PURQ_PROMP</name>
<reference key="1">
    <citation type="journal article" date="2003" name="Nature">
        <title>Genome divergence in two Prochlorococcus ecotypes reflects oceanic niche differentiation.</title>
        <authorList>
            <person name="Rocap G."/>
            <person name="Larimer F.W."/>
            <person name="Lamerdin J.E."/>
            <person name="Malfatti S."/>
            <person name="Chain P."/>
            <person name="Ahlgren N.A."/>
            <person name="Arellano A."/>
            <person name="Coleman M."/>
            <person name="Hauser L."/>
            <person name="Hess W.R."/>
            <person name="Johnson Z.I."/>
            <person name="Land M.L."/>
            <person name="Lindell D."/>
            <person name="Post A.F."/>
            <person name="Regala W."/>
            <person name="Shah M."/>
            <person name="Shaw S.L."/>
            <person name="Steglich C."/>
            <person name="Sullivan M.B."/>
            <person name="Ting C.S."/>
            <person name="Tolonen A."/>
            <person name="Webb E.A."/>
            <person name="Zinser E.R."/>
            <person name="Chisholm S.W."/>
        </authorList>
    </citation>
    <scope>NUCLEOTIDE SEQUENCE [LARGE SCALE GENOMIC DNA]</scope>
    <source>
        <strain>CCMP1986 / NIES-2087 / MED4</strain>
    </source>
</reference>